<proteinExistence type="evidence at protein level"/>
<comment type="function">
    <text evidence="1">Required for targeting of connexins to the plasma membrane.</text>
</comment>
<comment type="subunit">
    <text evidence="4">Interacts with connexins GJA1/CX43, GJB1/CX32, GJB2/CX26, GJB3/CX31, GJB6/CX30 and GJC1/CX45. Also interacts with GGA1 and GGA2. Does not interact with PANX1.</text>
</comment>
<comment type="interaction">
    <interactant intactId="EBI-2615407">
        <id>Q8CBC4-3</id>
    </interactant>
    <interactant intactId="EBI-2616212">
        <id>Q8R0H9</id>
        <label>Gga1</label>
    </interactant>
    <organismsDiffer>false</organismsDiffer>
    <experiments>2</experiments>
</comment>
<comment type="interaction">
    <interactant intactId="EBI-2615407">
        <id>Q8CBC4-3</id>
    </interactant>
    <interactant intactId="EBI-2616239">
        <id>Q6P5E6</id>
        <label>Gga2</label>
    </interactant>
    <organismsDiffer>false</organismsDiffer>
    <experiments>2</experiments>
</comment>
<comment type="interaction">
    <interactant intactId="EBI-2615407">
        <id>Q8CBC4-3</id>
    </interactant>
    <interactant intactId="EBI-2616119">
        <id>P21994</id>
        <label>Gjb2</label>
    </interactant>
    <organismsDiffer>true</organismsDiffer>
    <experiments>2</experiments>
</comment>
<comment type="subcellular location">
    <subcellularLocation>
        <location evidence="1">Cell membrane</location>
        <topology evidence="1">Single-pass membrane protein</topology>
    </subcellularLocation>
    <subcellularLocation>
        <location evidence="1">Golgi apparatus</location>
        <location evidence="1">trans-Golgi network membrane</location>
        <topology evidence="1">Single-pass membrane protein</topology>
    </subcellularLocation>
    <subcellularLocation>
        <location evidence="1">Cytoplasmic vesicle</location>
        <location evidence="1">Secretory vesicle</location>
    </subcellularLocation>
    <text evidence="1">Located predominantly in the trans-Golgi network. Probably trafficks between the trans-Golgi network and the cell membrane via the secretory pathway (By similarity).</text>
</comment>
<comment type="alternative products">
    <event type="alternative splicing"/>
    <isoform>
        <id>Q8CBC4-1</id>
        <name>1</name>
        <sequence type="displayed"/>
    </isoform>
    <isoform>
        <id>Q8CBC4-2</id>
        <name>2</name>
        <sequence type="described" ref="VSP_025821 VSP_025822"/>
    </isoform>
    <isoform>
        <id>Q8CBC4-3</id>
        <name>3</name>
        <sequence type="described" ref="VSP_038657"/>
    </isoform>
</comment>
<comment type="similarity">
    <text evidence="7">Belongs to the CNST family.</text>
</comment>
<feature type="chain" id="PRO_0000288907" description="Consortin">
    <location>
        <begin position="1"/>
        <end position="711"/>
    </location>
</feature>
<feature type="topological domain" description="Cytoplasmic" evidence="2">
    <location>
        <begin position="1"/>
        <end position="650"/>
    </location>
</feature>
<feature type="transmembrane region" description="Helical" evidence="2">
    <location>
        <begin position="651"/>
        <end position="671"/>
    </location>
</feature>
<feature type="topological domain" description="Extracellular" evidence="2">
    <location>
        <begin position="672"/>
        <end position="711"/>
    </location>
</feature>
<feature type="region of interest" description="Disordered" evidence="3">
    <location>
        <begin position="1"/>
        <end position="157"/>
    </location>
</feature>
<feature type="region of interest" description="Disordered" evidence="3">
    <location>
        <begin position="294"/>
        <end position="332"/>
    </location>
</feature>
<feature type="region of interest" description="Disordered" evidence="3">
    <location>
        <begin position="370"/>
        <end position="389"/>
    </location>
</feature>
<feature type="region of interest" description="Disordered" evidence="3">
    <location>
        <begin position="394"/>
        <end position="432"/>
    </location>
</feature>
<feature type="region of interest" description="Disordered" evidence="3">
    <location>
        <begin position="457"/>
        <end position="496"/>
    </location>
</feature>
<feature type="compositionally biased region" description="Polar residues" evidence="3">
    <location>
        <begin position="63"/>
        <end position="77"/>
    </location>
</feature>
<feature type="compositionally biased region" description="Basic residues" evidence="3">
    <location>
        <begin position="109"/>
        <end position="120"/>
    </location>
</feature>
<feature type="compositionally biased region" description="Basic and acidic residues" evidence="3">
    <location>
        <begin position="396"/>
        <end position="407"/>
    </location>
</feature>
<feature type="compositionally biased region" description="Basic and acidic residues" evidence="3">
    <location>
        <begin position="457"/>
        <end position="471"/>
    </location>
</feature>
<feature type="compositionally biased region" description="Polar residues" evidence="3">
    <location>
        <begin position="478"/>
        <end position="487"/>
    </location>
</feature>
<feature type="splice variant" id="VSP_038657" description="In isoform 3." evidence="5">
    <location>
        <begin position="1"/>
        <end position="289"/>
    </location>
</feature>
<feature type="splice variant" id="VSP_025821" description="In isoform 2." evidence="6">
    <original>DAVPVMQTQNATSQAAGEEEAAGVNANDPPKAPALQPLFSLIRGEVAQMDSRALPLFLHQVAETYFQEED</original>
    <variation>EAFRLSLLSFNKNKHFFWCCSAAAPVAPLCGSCIPFVPAVTVYREITTCLVCFLYRPHHGVLTLPSLRHGGFAL</variation>
    <location>
        <begin position="128"/>
        <end position="197"/>
    </location>
</feature>
<feature type="splice variant" id="VSP_025822" description="In isoform 2." evidence="6">
    <location>
        <begin position="198"/>
        <end position="711"/>
    </location>
</feature>
<feature type="mutagenesis site" description="Does not affect binding to connexins but results in their intracellular accumulation." evidence="4">
    <original>DSDLL</original>
    <variation>NSDAA</variation>
    <location>
        <begin position="558"/>
        <end position="562"/>
    </location>
</feature>
<dbReference type="EMBL" id="AK036332">
    <property type="protein sequence ID" value="BAC29388.1"/>
    <property type="molecule type" value="mRNA"/>
</dbReference>
<dbReference type="EMBL" id="AK040666">
    <property type="protein sequence ID" value="BAC30660.1"/>
    <property type="molecule type" value="mRNA"/>
</dbReference>
<dbReference type="EMBL" id="AK040899">
    <property type="protein sequence ID" value="BAC30736.1"/>
    <property type="molecule type" value="mRNA"/>
</dbReference>
<dbReference type="EMBL" id="AK146681">
    <property type="protein sequence ID" value="BAE27356.1"/>
    <property type="molecule type" value="mRNA"/>
</dbReference>
<dbReference type="EMBL" id="BC034107">
    <property type="protein sequence ID" value="AAH34107.1"/>
    <property type="molecule type" value="mRNA"/>
</dbReference>
<dbReference type="EMBL" id="BC054802">
    <property type="protein sequence ID" value="AAH54802.1"/>
    <property type="molecule type" value="mRNA"/>
</dbReference>
<dbReference type="CCDS" id="CCDS15562.1">
    <molecule id="Q8CBC4-1"/>
</dbReference>
<dbReference type="RefSeq" id="NP_666217.2">
    <molecule id="Q8CBC4-1"/>
    <property type="nucleotide sequence ID" value="NM_146105.3"/>
</dbReference>
<dbReference type="SMR" id="Q8CBC4"/>
<dbReference type="BioGRID" id="230548">
    <property type="interactions" value="2"/>
</dbReference>
<dbReference type="FunCoup" id="Q8CBC4">
    <property type="interactions" value="1483"/>
</dbReference>
<dbReference type="IntAct" id="Q8CBC4">
    <property type="interactions" value="9"/>
</dbReference>
<dbReference type="STRING" id="10090.ENSMUSP00000048205"/>
<dbReference type="GlyGen" id="Q8CBC4">
    <property type="glycosylation" value="1 site, 1 N-linked glycan (1 site)"/>
</dbReference>
<dbReference type="iPTMnet" id="Q8CBC4"/>
<dbReference type="PhosphoSitePlus" id="Q8CBC4"/>
<dbReference type="SwissPalm" id="Q8CBC4"/>
<dbReference type="PaxDb" id="10090-ENSMUSP00000048205"/>
<dbReference type="PeptideAtlas" id="Q8CBC4"/>
<dbReference type="ProteomicsDB" id="283468">
    <molecule id="Q8CBC4-1"/>
</dbReference>
<dbReference type="ProteomicsDB" id="283469">
    <molecule id="Q8CBC4-2"/>
</dbReference>
<dbReference type="ProteomicsDB" id="283470">
    <molecule id="Q8CBC4-3"/>
</dbReference>
<dbReference type="Pumba" id="Q8CBC4"/>
<dbReference type="Antibodypedia" id="2026">
    <property type="antibodies" value="21 antibodies from 10 providers"/>
</dbReference>
<dbReference type="DNASU" id="226744"/>
<dbReference type="Ensembl" id="ENSMUST00000040706.9">
    <molecule id="Q8CBC4-1"/>
    <property type="protein sequence ID" value="ENSMUSP00000048205.9"/>
    <property type="gene ID" value="ENSMUSG00000038949.9"/>
</dbReference>
<dbReference type="GeneID" id="226744"/>
<dbReference type="KEGG" id="mmu:226744"/>
<dbReference type="UCSC" id="uc007dvm.1">
    <molecule id="Q8CBC4-2"/>
    <property type="organism name" value="mouse"/>
</dbReference>
<dbReference type="UCSC" id="uc007dvo.1">
    <molecule id="Q8CBC4-1"/>
    <property type="organism name" value="mouse"/>
</dbReference>
<dbReference type="AGR" id="MGI:2445141"/>
<dbReference type="CTD" id="163882"/>
<dbReference type="MGI" id="MGI:2445141">
    <property type="gene designation" value="Cnst"/>
</dbReference>
<dbReference type="VEuPathDB" id="HostDB:ENSMUSG00000038949"/>
<dbReference type="eggNOG" id="ENOG502QSMS">
    <property type="taxonomic scope" value="Eukaryota"/>
</dbReference>
<dbReference type="GeneTree" id="ENSGT00390000005861"/>
<dbReference type="HOGENOM" id="CLU_023107_0_0_1"/>
<dbReference type="InParanoid" id="Q8CBC4"/>
<dbReference type="OMA" id="AKFCTTH"/>
<dbReference type="OrthoDB" id="9894200at2759"/>
<dbReference type="PhylomeDB" id="Q8CBC4"/>
<dbReference type="TreeFam" id="TF351172"/>
<dbReference type="BioGRID-ORCS" id="226744">
    <property type="hits" value="2 hits in 78 CRISPR screens"/>
</dbReference>
<dbReference type="ChiTaRS" id="Cnst">
    <property type="organism name" value="mouse"/>
</dbReference>
<dbReference type="PRO" id="PR:Q8CBC4"/>
<dbReference type="Proteomes" id="UP000000589">
    <property type="component" value="Chromosome 1"/>
</dbReference>
<dbReference type="RNAct" id="Q8CBC4">
    <property type="molecule type" value="protein"/>
</dbReference>
<dbReference type="Bgee" id="ENSMUSG00000038949">
    <property type="expression patterns" value="Expressed in vestibular membrane of cochlear duct and 222 other cell types or tissues"/>
</dbReference>
<dbReference type="GO" id="GO:0005886">
    <property type="term" value="C:plasma membrane"/>
    <property type="evidence" value="ECO:0000250"/>
    <property type="project" value="UniProtKB"/>
</dbReference>
<dbReference type="GO" id="GO:0032991">
    <property type="term" value="C:protein-containing complex"/>
    <property type="evidence" value="ECO:0007669"/>
    <property type="project" value="Ensembl"/>
</dbReference>
<dbReference type="GO" id="GO:0005802">
    <property type="term" value="C:trans-Golgi network"/>
    <property type="evidence" value="ECO:0000250"/>
    <property type="project" value="UniProtKB"/>
</dbReference>
<dbReference type="GO" id="GO:0030133">
    <property type="term" value="C:transport vesicle"/>
    <property type="evidence" value="ECO:0000250"/>
    <property type="project" value="UniProtKB"/>
</dbReference>
<dbReference type="GO" id="GO:0071253">
    <property type="term" value="F:connexin binding"/>
    <property type="evidence" value="ECO:0000314"/>
    <property type="project" value="UniProtKB"/>
</dbReference>
<dbReference type="GO" id="GO:0019902">
    <property type="term" value="F:phosphatase binding"/>
    <property type="evidence" value="ECO:0000250"/>
    <property type="project" value="UniProtKB"/>
</dbReference>
<dbReference type="GO" id="GO:0042998">
    <property type="term" value="P:positive regulation of Golgi to plasma membrane protein transport"/>
    <property type="evidence" value="ECO:0000250"/>
    <property type="project" value="UniProtKB"/>
</dbReference>
<dbReference type="InterPro" id="IPR042318">
    <property type="entry name" value="Consortin"/>
</dbReference>
<dbReference type="InterPro" id="IPR028129">
    <property type="entry name" value="Consortin_C"/>
</dbReference>
<dbReference type="InterPro" id="IPR054132">
    <property type="entry name" value="Consortin_N"/>
</dbReference>
<dbReference type="PANTHER" id="PTHR28581">
    <property type="entry name" value="CONSORTIN"/>
    <property type="match status" value="1"/>
</dbReference>
<dbReference type="PANTHER" id="PTHR28581:SF1">
    <property type="entry name" value="CONSORTIN"/>
    <property type="match status" value="1"/>
</dbReference>
<dbReference type="Pfam" id="PF15281">
    <property type="entry name" value="Consortin_C"/>
    <property type="match status" value="1"/>
</dbReference>
<dbReference type="Pfam" id="PF22883">
    <property type="entry name" value="Consortin_N"/>
    <property type="match status" value="1"/>
</dbReference>
<reference key="1">
    <citation type="journal article" date="2005" name="Science">
        <title>The transcriptional landscape of the mammalian genome.</title>
        <authorList>
            <person name="Carninci P."/>
            <person name="Kasukawa T."/>
            <person name="Katayama S."/>
            <person name="Gough J."/>
            <person name="Frith M.C."/>
            <person name="Maeda N."/>
            <person name="Oyama R."/>
            <person name="Ravasi T."/>
            <person name="Lenhard B."/>
            <person name="Wells C."/>
            <person name="Kodzius R."/>
            <person name="Shimokawa K."/>
            <person name="Bajic V.B."/>
            <person name="Brenner S.E."/>
            <person name="Batalov S."/>
            <person name="Forrest A.R."/>
            <person name="Zavolan M."/>
            <person name="Davis M.J."/>
            <person name="Wilming L.G."/>
            <person name="Aidinis V."/>
            <person name="Allen J.E."/>
            <person name="Ambesi-Impiombato A."/>
            <person name="Apweiler R."/>
            <person name="Aturaliya R.N."/>
            <person name="Bailey T.L."/>
            <person name="Bansal M."/>
            <person name="Baxter L."/>
            <person name="Beisel K.W."/>
            <person name="Bersano T."/>
            <person name="Bono H."/>
            <person name="Chalk A.M."/>
            <person name="Chiu K.P."/>
            <person name="Choudhary V."/>
            <person name="Christoffels A."/>
            <person name="Clutterbuck D.R."/>
            <person name="Crowe M.L."/>
            <person name="Dalla E."/>
            <person name="Dalrymple B.P."/>
            <person name="de Bono B."/>
            <person name="Della Gatta G."/>
            <person name="di Bernardo D."/>
            <person name="Down T."/>
            <person name="Engstrom P."/>
            <person name="Fagiolini M."/>
            <person name="Faulkner G."/>
            <person name="Fletcher C.F."/>
            <person name="Fukushima T."/>
            <person name="Furuno M."/>
            <person name="Futaki S."/>
            <person name="Gariboldi M."/>
            <person name="Georgii-Hemming P."/>
            <person name="Gingeras T.R."/>
            <person name="Gojobori T."/>
            <person name="Green R.E."/>
            <person name="Gustincich S."/>
            <person name="Harbers M."/>
            <person name="Hayashi Y."/>
            <person name="Hensch T.K."/>
            <person name="Hirokawa N."/>
            <person name="Hill D."/>
            <person name="Huminiecki L."/>
            <person name="Iacono M."/>
            <person name="Ikeo K."/>
            <person name="Iwama A."/>
            <person name="Ishikawa T."/>
            <person name="Jakt M."/>
            <person name="Kanapin A."/>
            <person name="Katoh M."/>
            <person name="Kawasawa Y."/>
            <person name="Kelso J."/>
            <person name="Kitamura H."/>
            <person name="Kitano H."/>
            <person name="Kollias G."/>
            <person name="Krishnan S.P."/>
            <person name="Kruger A."/>
            <person name="Kummerfeld S.K."/>
            <person name="Kurochkin I.V."/>
            <person name="Lareau L.F."/>
            <person name="Lazarevic D."/>
            <person name="Lipovich L."/>
            <person name="Liu J."/>
            <person name="Liuni S."/>
            <person name="McWilliam S."/>
            <person name="Madan Babu M."/>
            <person name="Madera M."/>
            <person name="Marchionni L."/>
            <person name="Matsuda H."/>
            <person name="Matsuzawa S."/>
            <person name="Miki H."/>
            <person name="Mignone F."/>
            <person name="Miyake S."/>
            <person name="Morris K."/>
            <person name="Mottagui-Tabar S."/>
            <person name="Mulder N."/>
            <person name="Nakano N."/>
            <person name="Nakauchi H."/>
            <person name="Ng P."/>
            <person name="Nilsson R."/>
            <person name="Nishiguchi S."/>
            <person name="Nishikawa S."/>
            <person name="Nori F."/>
            <person name="Ohara O."/>
            <person name="Okazaki Y."/>
            <person name="Orlando V."/>
            <person name="Pang K.C."/>
            <person name="Pavan W.J."/>
            <person name="Pavesi G."/>
            <person name="Pesole G."/>
            <person name="Petrovsky N."/>
            <person name="Piazza S."/>
            <person name="Reed J."/>
            <person name="Reid J.F."/>
            <person name="Ring B.Z."/>
            <person name="Ringwald M."/>
            <person name="Rost B."/>
            <person name="Ruan Y."/>
            <person name="Salzberg S.L."/>
            <person name="Sandelin A."/>
            <person name="Schneider C."/>
            <person name="Schoenbach C."/>
            <person name="Sekiguchi K."/>
            <person name="Semple C.A."/>
            <person name="Seno S."/>
            <person name="Sessa L."/>
            <person name="Sheng Y."/>
            <person name="Shibata Y."/>
            <person name="Shimada H."/>
            <person name="Shimada K."/>
            <person name="Silva D."/>
            <person name="Sinclair B."/>
            <person name="Sperling S."/>
            <person name="Stupka E."/>
            <person name="Sugiura K."/>
            <person name="Sultana R."/>
            <person name="Takenaka Y."/>
            <person name="Taki K."/>
            <person name="Tammoja K."/>
            <person name="Tan S.L."/>
            <person name="Tang S."/>
            <person name="Taylor M.S."/>
            <person name="Tegner J."/>
            <person name="Teichmann S.A."/>
            <person name="Ueda H.R."/>
            <person name="van Nimwegen E."/>
            <person name="Verardo R."/>
            <person name="Wei C.L."/>
            <person name="Yagi K."/>
            <person name="Yamanishi H."/>
            <person name="Zabarovsky E."/>
            <person name="Zhu S."/>
            <person name="Zimmer A."/>
            <person name="Hide W."/>
            <person name="Bult C."/>
            <person name="Grimmond S.M."/>
            <person name="Teasdale R.D."/>
            <person name="Liu E.T."/>
            <person name="Brusic V."/>
            <person name="Quackenbush J."/>
            <person name="Wahlestedt C."/>
            <person name="Mattick J.S."/>
            <person name="Hume D.A."/>
            <person name="Kai C."/>
            <person name="Sasaki D."/>
            <person name="Tomaru Y."/>
            <person name="Fukuda S."/>
            <person name="Kanamori-Katayama M."/>
            <person name="Suzuki M."/>
            <person name="Aoki J."/>
            <person name="Arakawa T."/>
            <person name="Iida J."/>
            <person name="Imamura K."/>
            <person name="Itoh M."/>
            <person name="Kato T."/>
            <person name="Kawaji H."/>
            <person name="Kawagashira N."/>
            <person name="Kawashima T."/>
            <person name="Kojima M."/>
            <person name="Kondo S."/>
            <person name="Konno H."/>
            <person name="Nakano K."/>
            <person name="Ninomiya N."/>
            <person name="Nishio T."/>
            <person name="Okada M."/>
            <person name="Plessy C."/>
            <person name="Shibata K."/>
            <person name="Shiraki T."/>
            <person name="Suzuki S."/>
            <person name="Tagami M."/>
            <person name="Waki K."/>
            <person name="Watahiki A."/>
            <person name="Okamura-Oho Y."/>
            <person name="Suzuki H."/>
            <person name="Kawai J."/>
            <person name="Hayashizaki Y."/>
        </authorList>
    </citation>
    <scope>NUCLEOTIDE SEQUENCE [LARGE SCALE MRNA] (ISOFORMS 1 AND 2)</scope>
    <source>
        <strain>C57BL/6J</strain>
        <tissue>Amnion</tissue>
        <tissue>Aorta</tissue>
        <tissue>Cerebellum</tissue>
        <tissue>Vein</tissue>
    </source>
</reference>
<reference key="2">
    <citation type="journal article" date="2004" name="Genome Res.">
        <title>The status, quality, and expansion of the NIH full-length cDNA project: the Mammalian Gene Collection (MGC).</title>
        <authorList>
            <consortium name="The MGC Project Team"/>
        </authorList>
    </citation>
    <scope>NUCLEOTIDE SEQUENCE [LARGE SCALE MRNA] (ISOFORMS 1 AND 3)</scope>
    <source>
        <strain>C57BL/6J</strain>
        <tissue>Brain</tissue>
        <tissue>Eye</tissue>
    </source>
</reference>
<reference key="3">
    <citation type="journal article" date="2010" name="Cell">
        <title>A tissue-specific atlas of mouse protein phosphorylation and expression.</title>
        <authorList>
            <person name="Huttlin E.L."/>
            <person name="Jedrychowski M.P."/>
            <person name="Elias J.E."/>
            <person name="Goswami T."/>
            <person name="Rad R."/>
            <person name="Beausoleil S.A."/>
            <person name="Villen J."/>
            <person name="Haas W."/>
            <person name="Sowa M.E."/>
            <person name="Gygi S.P."/>
        </authorList>
    </citation>
    <scope>IDENTIFICATION BY MASS SPECTROMETRY [LARGE SCALE ANALYSIS]</scope>
    <source>
        <tissue>Brain</tissue>
        <tissue>Brown adipose tissue</tissue>
        <tissue>Heart</tissue>
        <tissue>Lung</tissue>
        <tissue>Testis</tissue>
    </source>
</reference>
<reference key="4">
    <citation type="journal article" date="2010" name="Hum. Mol. Genet.">
        <title>Consortin, a trans-Golgi network cargo receptor for the plasma membrane targeting and recycling of connexins.</title>
        <authorList>
            <person name="del Castillo F.J."/>
            <person name="Cohen-Salmon M."/>
            <person name="Charollais A."/>
            <person name="Caille D."/>
            <person name="Lampe P.D."/>
            <person name="Chavrier P."/>
            <person name="Meda P."/>
            <person name="Petit C."/>
        </authorList>
    </citation>
    <scope>IDENTIFICATION OF ISOFORM 3</scope>
    <scope>INTERACTION WITH GGA1; GGA2; GJA1; GJB1; GJB2; GJB3; GJB6 AND GJC1</scope>
    <scope>MUTAGENESIS OF 558-562</scope>
</reference>
<evidence type="ECO:0000250" key="1"/>
<evidence type="ECO:0000255" key="2"/>
<evidence type="ECO:0000256" key="3">
    <source>
        <dbReference type="SAM" id="MobiDB-lite"/>
    </source>
</evidence>
<evidence type="ECO:0000269" key="4">
    <source>
    </source>
</evidence>
<evidence type="ECO:0000303" key="5">
    <source>
    </source>
</evidence>
<evidence type="ECO:0000303" key="6">
    <source>
    </source>
</evidence>
<evidence type="ECO:0000305" key="7"/>
<protein>
    <recommendedName>
        <fullName>Consortin</fullName>
    </recommendedName>
</protein>
<sequence>MDDSDPPTYSLQIEPQDGCHPGDSVERRVTRLPSVSDENENQLAGDGPAGLTTSEGAMGRATVSEQDSLNNNESFPSSCEAAPTENAENTPSEGPKDDPPSLGQDQKLPAKRSPRAKKSSPKSAPPGDAVPVMQTQNATSQAAGEEEAAGVNANDPPKAPALQPLFSLIRGEVAQMDSRALPLFLHQVAETYFQEEDYEKAMKFIQLERLYHEQLLANLSAIQEQWETKWKAVQPRTVTPLRNSEKGFNGEDFEQLAKICTTHQDPLLSKLKTAPVEPSPERKSLARAIMSEEAVGTEAAAKEPEIETCPSTDPSGDRHEEEPQESSPGCHQMEWQTASPELPGTAGKDHTEELPSSTNATLDLHTQSLETAGSRSGPAAASNACKDSSCVPAPPTEDHCGVARDPKVAPPSESVAEQKLSTGDDGALPGLISEGKYSQAHRKELCLPLQDAFEALPRDQPHSSEVAEPRQPDVTASDGKSAQSQAGLETGPESALCGDRKACDVSTLCLEVCMAPEERRDSEDRVSKETEDYLHSLLERCLKDAEDSLSYEDIQDDDSDLLQDLSPEEASYSLQEDLPPDESTLSLDDLAKKIEIAEAIPAEGLVSILKKRNDTVGSHPAQMQQKPAKRRVRFQEIDDNLEQDEVGGGSCILLILLCIATVFLSVGGTALYCTLGNIESPVCTDFADNVDFYYTKLLQGVAGLKHWVYLS</sequence>
<gene>
    <name type="primary">Cnst</name>
</gene>
<keyword id="KW-0025">Alternative splicing</keyword>
<keyword id="KW-1003">Cell membrane</keyword>
<keyword id="KW-0968">Cytoplasmic vesicle</keyword>
<keyword id="KW-0333">Golgi apparatus</keyword>
<keyword id="KW-0472">Membrane</keyword>
<keyword id="KW-1185">Reference proteome</keyword>
<keyword id="KW-0812">Transmembrane</keyword>
<keyword id="KW-1133">Transmembrane helix</keyword>
<accession>Q8CBC4</accession>
<accession>Q8BFS5</accession>
<accession>Q8K053</accession>
<organism>
    <name type="scientific">Mus musculus</name>
    <name type="common">Mouse</name>
    <dbReference type="NCBI Taxonomy" id="10090"/>
    <lineage>
        <taxon>Eukaryota</taxon>
        <taxon>Metazoa</taxon>
        <taxon>Chordata</taxon>
        <taxon>Craniata</taxon>
        <taxon>Vertebrata</taxon>
        <taxon>Euteleostomi</taxon>
        <taxon>Mammalia</taxon>
        <taxon>Eutheria</taxon>
        <taxon>Euarchontoglires</taxon>
        <taxon>Glires</taxon>
        <taxon>Rodentia</taxon>
        <taxon>Myomorpha</taxon>
        <taxon>Muroidea</taxon>
        <taxon>Muridae</taxon>
        <taxon>Murinae</taxon>
        <taxon>Mus</taxon>
        <taxon>Mus</taxon>
    </lineage>
</organism>
<name>CNST_MOUSE</name>